<gene>
    <name type="primary">KBP</name>
</gene>
<organism>
    <name type="scientific">Anas platyrhynchos</name>
    <name type="common">Mallard</name>
    <name type="synonym">Anas boschas</name>
    <dbReference type="NCBI Taxonomy" id="8839"/>
    <lineage>
        <taxon>Eukaryota</taxon>
        <taxon>Metazoa</taxon>
        <taxon>Chordata</taxon>
        <taxon>Craniata</taxon>
        <taxon>Vertebrata</taxon>
        <taxon>Euteleostomi</taxon>
        <taxon>Archelosauria</taxon>
        <taxon>Archosauria</taxon>
        <taxon>Dinosauria</taxon>
        <taxon>Saurischia</taxon>
        <taxon>Theropoda</taxon>
        <taxon>Coelurosauria</taxon>
        <taxon>Aves</taxon>
        <taxon>Neognathae</taxon>
        <taxon>Galloanserae</taxon>
        <taxon>Anseriformes</taxon>
        <taxon>Anatidae</taxon>
        <taxon>Anatinae</taxon>
        <taxon>Anas</taxon>
    </lineage>
</organism>
<sequence>MDKGQHFVFFVLTTVLLLRESSHAGAMRNDAAASKDTDLRGPEENLPTLTVTTILEDPYVMVRRAELEGYCIDLLKALASMLHFSYKVKVVGDGKYGAVSSNGNWTGMIGEILRQEADIAVAPLTVTSAREEVVSFTTPFLQTGIGILLRKDTMSQEMSFFHFLAPFSKETWTGLLFAYILTCFCLFLVARLSPCEWNEPKNEENHFTFLNSLWFGAGALALQGVTPRPKALSVRVIAAIWWLFTIALLAAYIANFTALLSSGSEQLPIQTFEDLVKQRKLEFGTLDGSSTFYYFKNSKNPIHQMIYEYMDKRRDHVLVKTYQEAVQRVMDSNYAFIGESISQDLAAARHCNLIRAPEVIGARGFGIATAQASPWTKKLSIAVLKLRESGDLDYLRNKWWETSCLHKSRERWSPLQPQALGGLFLTLAIGLALGVIAAVVELSNKSRHAAGHVKKSCCSIFTEEMCTRLRIKENTRQSQETSGRANA</sequence>
<reference key="1">
    <citation type="journal article" date="1993" name="Brain Res. Mol. Brain Res.">
        <title>Molecular cloning of the kainate-binding protein and calmodulin genes which are induced by an imprinting stimulus in ducklings.</title>
        <authorList>
            <person name="Kimura N."/>
            <person name="Kurosawa N."/>
            <person name="Kondo K."/>
            <person name="Tsukada Y."/>
        </authorList>
    </citation>
    <scope>NUCLEOTIDE SEQUENCE [MRNA]</scope>
</reference>
<name>GLRK_ANAPL</name>
<comment type="function">
    <text evidence="1">Receptor for glutamate. L-glutamate acts as an excitatory neurotransmitter at many synapses in the central nervous system. The postsynaptic actions of Glu are mediated by a variety of receptors that are named according to their selective agonists (By similarity).</text>
</comment>
<comment type="subcellular location">
    <subcellularLocation>
        <location>Cell membrane</location>
        <topology>Multi-pass membrane protein</topology>
    </subcellularLocation>
    <subcellularLocation>
        <location>Postsynaptic cell membrane</location>
        <topology>Multi-pass membrane protein</topology>
    </subcellularLocation>
</comment>
<comment type="similarity">
    <text evidence="3">Belongs to the glutamate-gated ion channel (TC 1.A.10.1) family.</text>
</comment>
<feature type="signal peptide" evidence="1">
    <location>
        <begin position="1"/>
        <end position="23"/>
    </location>
</feature>
<feature type="chain" id="PRO_0000011556" description="Probable glutamate receptor">
    <location>
        <begin position="24"/>
        <end position="487"/>
    </location>
</feature>
<feature type="topological domain" description="Extracellular" evidence="2">
    <location>
        <begin position="24"/>
        <end position="169"/>
    </location>
</feature>
<feature type="transmembrane region" description="Helical" evidence="2">
    <location>
        <begin position="170"/>
        <end position="190"/>
    </location>
</feature>
<feature type="topological domain" description="Cytoplasmic" evidence="2">
    <location>
        <begin position="191"/>
        <end position="235"/>
    </location>
</feature>
<feature type="transmembrane region" description="Helical" evidence="2">
    <location>
        <begin position="236"/>
        <end position="256"/>
    </location>
</feature>
<feature type="topological domain" description="Extracellular" evidence="2">
    <location>
        <begin position="257"/>
        <end position="419"/>
    </location>
</feature>
<feature type="transmembrane region" description="Helical" evidence="2">
    <location>
        <begin position="420"/>
        <end position="440"/>
    </location>
</feature>
<feature type="topological domain" description="Cytoplasmic" evidence="2">
    <location>
        <begin position="441"/>
        <end position="487"/>
    </location>
</feature>
<feature type="glycosylation site" description="N-linked (GlcNAc...) asparagine" evidence="2">
    <location>
        <position position="104"/>
    </location>
</feature>
<proteinExistence type="evidence at transcript level"/>
<evidence type="ECO:0000250" key="1"/>
<evidence type="ECO:0000255" key="2"/>
<evidence type="ECO:0000305" key="3"/>
<accession>Q90218</accession>
<protein>
    <recommendedName>
        <fullName>Probable glutamate receptor</fullName>
    </recommendedName>
    <alternativeName>
        <fullName>Kainate-binding protein</fullName>
    </alternativeName>
</protein>
<keyword id="KW-1003">Cell membrane</keyword>
<keyword id="KW-0325">Glycoprotein</keyword>
<keyword id="KW-0407">Ion channel</keyword>
<keyword id="KW-0406">Ion transport</keyword>
<keyword id="KW-1071">Ligand-gated ion channel</keyword>
<keyword id="KW-0472">Membrane</keyword>
<keyword id="KW-0628">Postsynaptic cell membrane</keyword>
<keyword id="KW-0675">Receptor</keyword>
<keyword id="KW-0732">Signal</keyword>
<keyword id="KW-0770">Synapse</keyword>
<keyword id="KW-0812">Transmembrane</keyword>
<keyword id="KW-1133">Transmembrane helix</keyword>
<keyword id="KW-0813">Transport</keyword>
<dbReference type="EMBL" id="D83351">
    <property type="protein sequence ID" value="BAA11897.1"/>
    <property type="molecule type" value="mRNA"/>
</dbReference>
<dbReference type="PIR" id="I51201">
    <property type="entry name" value="I51201"/>
</dbReference>
<dbReference type="RefSeq" id="NP_001297319.1">
    <property type="nucleotide sequence ID" value="NM_001310390.1"/>
</dbReference>
<dbReference type="RefSeq" id="XP_005011100.1">
    <property type="nucleotide sequence ID" value="XM_005011043.2"/>
</dbReference>
<dbReference type="SMR" id="Q90218"/>
<dbReference type="GlyCosmos" id="Q90218">
    <property type="glycosylation" value="1 site, No reported glycans"/>
</dbReference>
<dbReference type="Ensembl" id="ENSAPLT00020023247.1">
    <property type="protein sequence ID" value="ENSAPLP00020021548.1"/>
    <property type="gene ID" value="ENSAPLG00020015073.1"/>
</dbReference>
<dbReference type="GeneID" id="101799836"/>
<dbReference type="KEGG" id="apla:101799836"/>
<dbReference type="CTD" id="396300"/>
<dbReference type="HOGENOM" id="CLU_007257_0_0_1"/>
<dbReference type="OMA" id="GPFNYFE"/>
<dbReference type="OrthoDB" id="5984008at2759"/>
<dbReference type="Proteomes" id="UP000694400">
    <property type="component" value="Chromosome 21"/>
</dbReference>
<dbReference type="GO" id="GO:0045211">
    <property type="term" value="C:postsynaptic membrane"/>
    <property type="evidence" value="ECO:0007669"/>
    <property type="project" value="UniProtKB-SubCell"/>
</dbReference>
<dbReference type="GO" id="GO:0015276">
    <property type="term" value="F:ligand-gated monoatomic ion channel activity"/>
    <property type="evidence" value="ECO:0007669"/>
    <property type="project" value="InterPro"/>
</dbReference>
<dbReference type="GO" id="GO:0038023">
    <property type="term" value="F:signaling receptor activity"/>
    <property type="evidence" value="ECO:0007669"/>
    <property type="project" value="InterPro"/>
</dbReference>
<dbReference type="CDD" id="cd13685">
    <property type="entry name" value="PBP2_iGluR_non_NMDA_like"/>
    <property type="match status" value="1"/>
</dbReference>
<dbReference type="FunFam" id="1.10.287.70:FF:000143">
    <property type="entry name" value="Probable glutamate receptor"/>
    <property type="match status" value="1"/>
</dbReference>
<dbReference type="FunFam" id="3.40.190.10:FF:000364">
    <property type="entry name" value="Si:dkey-183j2.10"/>
    <property type="match status" value="1"/>
</dbReference>
<dbReference type="Gene3D" id="3.40.190.10">
    <property type="entry name" value="Periplasmic binding protein-like II"/>
    <property type="match status" value="3"/>
</dbReference>
<dbReference type="InterPro" id="IPR019594">
    <property type="entry name" value="Glu/Gly-bd"/>
</dbReference>
<dbReference type="InterPro" id="IPR001508">
    <property type="entry name" value="Iono_Glu_rcpt_met"/>
</dbReference>
<dbReference type="InterPro" id="IPR015683">
    <property type="entry name" value="Ionotropic_Glu_rcpt"/>
</dbReference>
<dbReference type="InterPro" id="IPR001320">
    <property type="entry name" value="Iontro_rcpt_C"/>
</dbReference>
<dbReference type="PANTHER" id="PTHR18966">
    <property type="entry name" value="IONOTROPIC GLUTAMATE RECEPTOR"/>
    <property type="match status" value="1"/>
</dbReference>
<dbReference type="Pfam" id="PF00060">
    <property type="entry name" value="Lig_chan"/>
    <property type="match status" value="1"/>
</dbReference>
<dbReference type="Pfam" id="PF10613">
    <property type="entry name" value="Lig_chan-Glu_bd"/>
    <property type="match status" value="1"/>
</dbReference>
<dbReference type="PRINTS" id="PR00177">
    <property type="entry name" value="NMDARECEPTOR"/>
</dbReference>
<dbReference type="SMART" id="SM00918">
    <property type="entry name" value="Lig_chan-Glu_bd"/>
    <property type="match status" value="1"/>
</dbReference>
<dbReference type="SMART" id="SM00079">
    <property type="entry name" value="PBPe"/>
    <property type="match status" value="1"/>
</dbReference>
<dbReference type="SUPFAM" id="SSF53850">
    <property type="entry name" value="Periplasmic binding protein-like II"/>
    <property type="match status" value="1"/>
</dbReference>
<dbReference type="SUPFAM" id="SSF81324">
    <property type="entry name" value="Voltage-gated potassium channels"/>
    <property type="match status" value="1"/>
</dbReference>